<comment type="function">
    <text evidence="1">Formation of pseudouridine at positions 38, 39 and 40 in the anticodon stem and loop of transfer RNAs.</text>
</comment>
<comment type="catalytic activity">
    <reaction evidence="1">
        <text>uridine(38/39/40) in tRNA = pseudouridine(38/39/40) in tRNA</text>
        <dbReference type="Rhea" id="RHEA:22376"/>
        <dbReference type="Rhea" id="RHEA-COMP:10085"/>
        <dbReference type="Rhea" id="RHEA-COMP:10087"/>
        <dbReference type="ChEBI" id="CHEBI:65314"/>
        <dbReference type="ChEBI" id="CHEBI:65315"/>
        <dbReference type="EC" id="5.4.99.12"/>
    </reaction>
</comment>
<comment type="subunit">
    <text evidence="1">Homodimer.</text>
</comment>
<comment type="similarity">
    <text evidence="1">Belongs to the tRNA pseudouridine synthase TruA family.</text>
</comment>
<reference key="1">
    <citation type="journal article" date="2006" name="Appl. Environ. Microbiol.">
        <title>Complete genome sequence of the marine, chemolithoautotrophic, ammonia-oxidizing bacterium Nitrosococcus oceani ATCC 19707.</title>
        <authorList>
            <person name="Klotz M.G."/>
            <person name="Arp D.J."/>
            <person name="Chain P.S.G."/>
            <person name="El-Sheikh A.F."/>
            <person name="Hauser L.J."/>
            <person name="Hommes N.G."/>
            <person name="Larimer F.W."/>
            <person name="Malfatti S.A."/>
            <person name="Norton J.M."/>
            <person name="Poret-Peterson A.T."/>
            <person name="Vergez L.M."/>
            <person name="Ward B.B."/>
        </authorList>
    </citation>
    <scope>NUCLEOTIDE SEQUENCE [LARGE SCALE GENOMIC DNA]</scope>
    <source>
        <strain>ATCC 19707 / BCRC 17464 / JCM 30415 / NCIMB 11848 / C-107</strain>
    </source>
</reference>
<keyword id="KW-0413">Isomerase</keyword>
<keyword id="KW-1185">Reference proteome</keyword>
<keyword id="KW-0819">tRNA processing</keyword>
<feature type="chain" id="PRO_1000017124" description="tRNA pseudouridine synthase A">
    <location>
        <begin position="1"/>
        <end position="259"/>
    </location>
</feature>
<feature type="active site" description="Nucleophile" evidence="1">
    <location>
        <position position="51"/>
    </location>
</feature>
<feature type="binding site" evidence="1">
    <location>
        <position position="109"/>
    </location>
    <ligand>
        <name>substrate</name>
    </ligand>
</feature>
<proteinExistence type="inferred from homology"/>
<gene>
    <name evidence="1" type="primary">truA</name>
    <name type="ordered locus">Noc_1018</name>
</gene>
<protein>
    <recommendedName>
        <fullName evidence="1">tRNA pseudouridine synthase A</fullName>
        <ecNumber evidence="1">5.4.99.12</ecNumber>
    </recommendedName>
    <alternativeName>
        <fullName evidence="1">tRNA pseudouridine(38-40) synthase</fullName>
    </alternativeName>
    <alternativeName>
        <fullName evidence="1">tRNA pseudouridylate synthase I</fullName>
    </alternativeName>
    <alternativeName>
        <fullName evidence="1">tRNA-uridine isomerase I</fullName>
    </alternativeName>
</protein>
<dbReference type="EC" id="5.4.99.12" evidence="1"/>
<dbReference type="EMBL" id="CP000127">
    <property type="protein sequence ID" value="ABA57526.1"/>
    <property type="molecule type" value="Genomic_DNA"/>
</dbReference>
<dbReference type="RefSeq" id="WP_002808568.1">
    <property type="nucleotide sequence ID" value="NC_007484.1"/>
</dbReference>
<dbReference type="SMR" id="Q3JCC0"/>
<dbReference type="FunCoup" id="Q3JCC0">
    <property type="interactions" value="498"/>
</dbReference>
<dbReference type="STRING" id="323261.Noc_1018"/>
<dbReference type="KEGG" id="noc:Noc_1018"/>
<dbReference type="eggNOG" id="COG0101">
    <property type="taxonomic scope" value="Bacteria"/>
</dbReference>
<dbReference type="HOGENOM" id="CLU_014673_0_2_6"/>
<dbReference type="InParanoid" id="Q3JCC0"/>
<dbReference type="Proteomes" id="UP000006838">
    <property type="component" value="Chromosome"/>
</dbReference>
<dbReference type="GO" id="GO:0003723">
    <property type="term" value="F:RNA binding"/>
    <property type="evidence" value="ECO:0007669"/>
    <property type="project" value="InterPro"/>
</dbReference>
<dbReference type="GO" id="GO:0160147">
    <property type="term" value="F:tRNA pseudouridine(38-40) synthase activity"/>
    <property type="evidence" value="ECO:0007669"/>
    <property type="project" value="UniProtKB-EC"/>
</dbReference>
<dbReference type="GO" id="GO:0031119">
    <property type="term" value="P:tRNA pseudouridine synthesis"/>
    <property type="evidence" value="ECO:0007669"/>
    <property type="project" value="UniProtKB-UniRule"/>
</dbReference>
<dbReference type="CDD" id="cd02570">
    <property type="entry name" value="PseudoU_synth_EcTruA"/>
    <property type="match status" value="1"/>
</dbReference>
<dbReference type="FunFam" id="3.30.70.580:FF:000001">
    <property type="entry name" value="tRNA pseudouridine synthase A"/>
    <property type="match status" value="1"/>
</dbReference>
<dbReference type="Gene3D" id="3.30.70.660">
    <property type="entry name" value="Pseudouridine synthase I, catalytic domain, C-terminal subdomain"/>
    <property type="match status" value="1"/>
</dbReference>
<dbReference type="Gene3D" id="3.30.70.580">
    <property type="entry name" value="Pseudouridine synthase I, catalytic domain, N-terminal subdomain"/>
    <property type="match status" value="1"/>
</dbReference>
<dbReference type="HAMAP" id="MF_00171">
    <property type="entry name" value="TruA"/>
    <property type="match status" value="1"/>
</dbReference>
<dbReference type="InterPro" id="IPR020103">
    <property type="entry name" value="PsdUridine_synth_cat_dom_sf"/>
</dbReference>
<dbReference type="InterPro" id="IPR001406">
    <property type="entry name" value="PsdUridine_synth_TruA"/>
</dbReference>
<dbReference type="InterPro" id="IPR020097">
    <property type="entry name" value="PsdUridine_synth_TruA_a/b_dom"/>
</dbReference>
<dbReference type="InterPro" id="IPR020095">
    <property type="entry name" value="PsdUridine_synth_TruA_C"/>
</dbReference>
<dbReference type="InterPro" id="IPR020094">
    <property type="entry name" value="TruA/RsuA/RluB/E/F_N"/>
</dbReference>
<dbReference type="NCBIfam" id="TIGR00071">
    <property type="entry name" value="hisT_truA"/>
    <property type="match status" value="1"/>
</dbReference>
<dbReference type="PANTHER" id="PTHR11142">
    <property type="entry name" value="PSEUDOURIDYLATE SYNTHASE"/>
    <property type="match status" value="1"/>
</dbReference>
<dbReference type="PANTHER" id="PTHR11142:SF0">
    <property type="entry name" value="TRNA PSEUDOURIDINE SYNTHASE-LIKE 1"/>
    <property type="match status" value="1"/>
</dbReference>
<dbReference type="Pfam" id="PF01416">
    <property type="entry name" value="PseudoU_synth_1"/>
    <property type="match status" value="2"/>
</dbReference>
<dbReference type="PIRSF" id="PIRSF001430">
    <property type="entry name" value="tRNA_psdUrid_synth"/>
    <property type="match status" value="1"/>
</dbReference>
<dbReference type="SUPFAM" id="SSF55120">
    <property type="entry name" value="Pseudouridine synthase"/>
    <property type="match status" value="1"/>
</dbReference>
<name>TRUA_NITOC</name>
<evidence type="ECO:0000255" key="1">
    <source>
        <dbReference type="HAMAP-Rule" id="MF_00171"/>
    </source>
</evidence>
<sequence>MRIALGLEYDGSNFSGWQSQKGVRTVQATLEQALSAVANEPVTVITAGRTDAGVHAAAQVVHFDTATFRLEHNWVFGGNANLLPEVAILWAQPVNEAFHARFSAIARHYRYIILNRGARPAIANRRVTWYCQPLSVTKMKEAGAFLVGEHDFSSFRAKACQAKSPVRNVHYLEVTRQGDWIVIDISANAFLHHMVRNIAGVLMAIGKGEQPPRWAEEVLQARCRAVGGVTARPDGLYLVRVDYPDHFDLPRLSRPVTVW</sequence>
<accession>Q3JCC0</accession>
<organism>
    <name type="scientific">Nitrosococcus oceani (strain ATCC 19707 / BCRC 17464 / JCM 30415 / NCIMB 11848 / C-107)</name>
    <dbReference type="NCBI Taxonomy" id="323261"/>
    <lineage>
        <taxon>Bacteria</taxon>
        <taxon>Pseudomonadati</taxon>
        <taxon>Pseudomonadota</taxon>
        <taxon>Gammaproteobacteria</taxon>
        <taxon>Chromatiales</taxon>
        <taxon>Chromatiaceae</taxon>
        <taxon>Nitrosococcus</taxon>
    </lineage>
</organism>